<reference key="1">
    <citation type="journal article" date="2006" name="Genome Res.">
        <title>Skewed genomic variability in strains of the toxigenic bacterial pathogen, Clostridium perfringens.</title>
        <authorList>
            <person name="Myers G.S.A."/>
            <person name="Rasko D.A."/>
            <person name="Cheung J.K."/>
            <person name="Ravel J."/>
            <person name="Seshadri R."/>
            <person name="DeBoy R.T."/>
            <person name="Ren Q."/>
            <person name="Varga J."/>
            <person name="Awad M.M."/>
            <person name="Brinkac L.M."/>
            <person name="Daugherty S.C."/>
            <person name="Haft D.H."/>
            <person name="Dodson R.J."/>
            <person name="Madupu R."/>
            <person name="Nelson W.C."/>
            <person name="Rosovitz M.J."/>
            <person name="Sullivan S.A."/>
            <person name="Khouri H."/>
            <person name="Dimitrov G.I."/>
            <person name="Watkins K.L."/>
            <person name="Mulligan S."/>
            <person name="Benton J."/>
            <person name="Radune D."/>
            <person name="Fisher D.J."/>
            <person name="Atkins H.S."/>
            <person name="Hiscox T."/>
            <person name="Jost B.H."/>
            <person name="Billington S.J."/>
            <person name="Songer J.G."/>
            <person name="McClane B.A."/>
            <person name="Titball R.W."/>
            <person name="Rood J.I."/>
            <person name="Melville S.B."/>
            <person name="Paulsen I.T."/>
        </authorList>
    </citation>
    <scope>NUCLEOTIDE SEQUENCE [LARGE SCALE GENOMIC DNA]</scope>
    <source>
        <strain>ATCC 13124 / DSM 756 / JCM 1290 / NCIMB 6125 / NCTC 8237 / S 107 / Type A</strain>
    </source>
</reference>
<keyword id="KW-0028">Amino-acid biosynthesis</keyword>
<keyword id="KW-0057">Aromatic amino acid biosynthesis</keyword>
<keyword id="KW-0521">NADP</keyword>
<keyword id="KW-0560">Oxidoreductase</keyword>
<protein>
    <recommendedName>
        <fullName evidence="1">Shikimate dehydrogenase (NADP(+))</fullName>
        <shortName evidence="1">SDH</shortName>
        <ecNumber evidence="1">1.1.1.25</ecNumber>
    </recommendedName>
</protein>
<proteinExistence type="inferred from homology"/>
<accession>Q0TT95</accession>
<feature type="chain" id="PRO_1000021277" description="Shikimate dehydrogenase (NADP(+))">
    <location>
        <begin position="1"/>
        <end position="271"/>
    </location>
</feature>
<feature type="active site" description="Proton acceptor" evidence="1">
    <location>
        <position position="65"/>
    </location>
</feature>
<feature type="binding site" evidence="1">
    <location>
        <begin position="14"/>
        <end position="16"/>
    </location>
    <ligand>
        <name>shikimate</name>
        <dbReference type="ChEBI" id="CHEBI:36208"/>
    </ligand>
</feature>
<feature type="binding site" evidence="1">
    <location>
        <position position="61"/>
    </location>
    <ligand>
        <name>shikimate</name>
        <dbReference type="ChEBI" id="CHEBI:36208"/>
    </ligand>
</feature>
<feature type="binding site" evidence="1">
    <location>
        <position position="86"/>
    </location>
    <ligand>
        <name>shikimate</name>
        <dbReference type="ChEBI" id="CHEBI:36208"/>
    </ligand>
</feature>
<feature type="binding site" evidence="1">
    <location>
        <position position="101"/>
    </location>
    <ligand>
        <name>shikimate</name>
        <dbReference type="ChEBI" id="CHEBI:36208"/>
    </ligand>
</feature>
<feature type="binding site" evidence="1">
    <location>
        <begin position="125"/>
        <end position="129"/>
    </location>
    <ligand>
        <name>NADP(+)</name>
        <dbReference type="ChEBI" id="CHEBI:58349"/>
    </ligand>
</feature>
<feature type="binding site" evidence="1">
    <location>
        <position position="212"/>
    </location>
    <ligand>
        <name>NADP(+)</name>
        <dbReference type="ChEBI" id="CHEBI:58349"/>
    </ligand>
</feature>
<feature type="binding site" evidence="1">
    <location>
        <position position="214"/>
    </location>
    <ligand>
        <name>shikimate</name>
        <dbReference type="ChEBI" id="CHEBI:36208"/>
    </ligand>
</feature>
<feature type="binding site" evidence="1">
    <location>
        <position position="235"/>
    </location>
    <ligand>
        <name>NADP(+)</name>
        <dbReference type="ChEBI" id="CHEBI:58349"/>
    </ligand>
</feature>
<dbReference type="EC" id="1.1.1.25" evidence="1"/>
<dbReference type="EMBL" id="CP000246">
    <property type="protein sequence ID" value="ABG83549.1"/>
    <property type="molecule type" value="Genomic_DNA"/>
</dbReference>
<dbReference type="RefSeq" id="WP_011590313.1">
    <property type="nucleotide sequence ID" value="NC_008261.1"/>
</dbReference>
<dbReference type="SMR" id="Q0TT95"/>
<dbReference type="STRING" id="195103.CPF_0693"/>
<dbReference type="PaxDb" id="195103-CPF_0693"/>
<dbReference type="KEGG" id="cpf:CPF_0693"/>
<dbReference type="eggNOG" id="COG0169">
    <property type="taxonomic scope" value="Bacteria"/>
</dbReference>
<dbReference type="HOGENOM" id="CLU_044063_4_1_9"/>
<dbReference type="UniPathway" id="UPA00053">
    <property type="reaction ID" value="UER00087"/>
</dbReference>
<dbReference type="Proteomes" id="UP000001823">
    <property type="component" value="Chromosome"/>
</dbReference>
<dbReference type="GO" id="GO:0005829">
    <property type="term" value="C:cytosol"/>
    <property type="evidence" value="ECO:0007669"/>
    <property type="project" value="TreeGrafter"/>
</dbReference>
<dbReference type="GO" id="GO:0050661">
    <property type="term" value="F:NADP binding"/>
    <property type="evidence" value="ECO:0007669"/>
    <property type="project" value="InterPro"/>
</dbReference>
<dbReference type="GO" id="GO:0004764">
    <property type="term" value="F:shikimate 3-dehydrogenase (NADP+) activity"/>
    <property type="evidence" value="ECO:0007669"/>
    <property type="project" value="UniProtKB-UniRule"/>
</dbReference>
<dbReference type="GO" id="GO:0008652">
    <property type="term" value="P:amino acid biosynthetic process"/>
    <property type="evidence" value="ECO:0007669"/>
    <property type="project" value="UniProtKB-KW"/>
</dbReference>
<dbReference type="GO" id="GO:0009073">
    <property type="term" value="P:aromatic amino acid family biosynthetic process"/>
    <property type="evidence" value="ECO:0007669"/>
    <property type="project" value="UniProtKB-KW"/>
</dbReference>
<dbReference type="GO" id="GO:0009423">
    <property type="term" value="P:chorismate biosynthetic process"/>
    <property type="evidence" value="ECO:0007669"/>
    <property type="project" value="UniProtKB-UniRule"/>
</dbReference>
<dbReference type="GO" id="GO:0019632">
    <property type="term" value="P:shikimate metabolic process"/>
    <property type="evidence" value="ECO:0007669"/>
    <property type="project" value="InterPro"/>
</dbReference>
<dbReference type="CDD" id="cd01065">
    <property type="entry name" value="NAD_bind_Shikimate_DH"/>
    <property type="match status" value="1"/>
</dbReference>
<dbReference type="Gene3D" id="3.40.50.10860">
    <property type="entry name" value="Leucine Dehydrogenase, chain A, domain 1"/>
    <property type="match status" value="1"/>
</dbReference>
<dbReference type="Gene3D" id="3.40.50.720">
    <property type="entry name" value="NAD(P)-binding Rossmann-like Domain"/>
    <property type="match status" value="1"/>
</dbReference>
<dbReference type="HAMAP" id="MF_00222">
    <property type="entry name" value="Shikimate_DH_AroE"/>
    <property type="match status" value="1"/>
</dbReference>
<dbReference type="InterPro" id="IPR046346">
    <property type="entry name" value="Aminoacid_DH-like_N_sf"/>
</dbReference>
<dbReference type="InterPro" id="IPR036291">
    <property type="entry name" value="NAD(P)-bd_dom_sf"/>
</dbReference>
<dbReference type="InterPro" id="IPR011342">
    <property type="entry name" value="Shikimate_DH"/>
</dbReference>
<dbReference type="InterPro" id="IPR013708">
    <property type="entry name" value="Shikimate_DH-bd_N"/>
</dbReference>
<dbReference type="InterPro" id="IPR022893">
    <property type="entry name" value="Shikimate_DH_fam"/>
</dbReference>
<dbReference type="InterPro" id="IPR006151">
    <property type="entry name" value="Shikm_DH/Glu-tRNA_Rdtase"/>
</dbReference>
<dbReference type="NCBIfam" id="TIGR00507">
    <property type="entry name" value="aroE"/>
    <property type="match status" value="1"/>
</dbReference>
<dbReference type="PANTHER" id="PTHR21089:SF1">
    <property type="entry name" value="BIFUNCTIONAL 3-DEHYDROQUINATE DEHYDRATASE_SHIKIMATE DEHYDROGENASE, CHLOROPLASTIC"/>
    <property type="match status" value="1"/>
</dbReference>
<dbReference type="PANTHER" id="PTHR21089">
    <property type="entry name" value="SHIKIMATE DEHYDROGENASE"/>
    <property type="match status" value="1"/>
</dbReference>
<dbReference type="Pfam" id="PF01488">
    <property type="entry name" value="Shikimate_DH"/>
    <property type="match status" value="1"/>
</dbReference>
<dbReference type="Pfam" id="PF08501">
    <property type="entry name" value="Shikimate_dh_N"/>
    <property type="match status" value="1"/>
</dbReference>
<dbReference type="SUPFAM" id="SSF53223">
    <property type="entry name" value="Aminoacid dehydrogenase-like, N-terminal domain"/>
    <property type="match status" value="1"/>
</dbReference>
<dbReference type="SUPFAM" id="SSF51735">
    <property type="entry name" value="NAD(P)-binding Rossmann-fold domains"/>
    <property type="match status" value="1"/>
</dbReference>
<evidence type="ECO:0000255" key="1">
    <source>
        <dbReference type="HAMAP-Rule" id="MF_00222"/>
    </source>
</evidence>
<comment type="function">
    <text evidence="1">Involved in the biosynthesis of the chorismate, which leads to the biosynthesis of aromatic amino acids. Catalyzes the reversible NADPH linked reduction of 3-dehydroshikimate (DHSA) to yield shikimate (SA).</text>
</comment>
<comment type="catalytic activity">
    <reaction evidence="1">
        <text>shikimate + NADP(+) = 3-dehydroshikimate + NADPH + H(+)</text>
        <dbReference type="Rhea" id="RHEA:17737"/>
        <dbReference type="ChEBI" id="CHEBI:15378"/>
        <dbReference type="ChEBI" id="CHEBI:16630"/>
        <dbReference type="ChEBI" id="CHEBI:36208"/>
        <dbReference type="ChEBI" id="CHEBI:57783"/>
        <dbReference type="ChEBI" id="CHEBI:58349"/>
        <dbReference type="EC" id="1.1.1.25"/>
    </reaction>
</comment>
<comment type="pathway">
    <text evidence="1">Metabolic intermediate biosynthesis; chorismate biosynthesis; chorismate from D-erythrose 4-phosphate and phosphoenolpyruvate: step 4/7.</text>
</comment>
<comment type="subunit">
    <text evidence="1">Homodimer.</text>
</comment>
<comment type="similarity">
    <text evidence="1">Belongs to the shikimate dehydrogenase family.</text>
</comment>
<organism>
    <name type="scientific">Clostridium perfringens (strain ATCC 13124 / DSM 756 / JCM 1290 / NCIMB 6125 / NCTC 8237 / Type A)</name>
    <dbReference type="NCBI Taxonomy" id="195103"/>
    <lineage>
        <taxon>Bacteria</taxon>
        <taxon>Bacillati</taxon>
        <taxon>Bacillota</taxon>
        <taxon>Clostridia</taxon>
        <taxon>Eubacteriales</taxon>
        <taxon>Clostridiaceae</taxon>
        <taxon>Clostridium</taxon>
    </lineage>
</organism>
<sequence length="271" mass="30503">MKLFGLIGEKLGHSLSPEIHNKVFKDNNIDGLYNLFSVKKDFENNIVESLKCLGVKGANVTIPYKEKVMDQLDIISHEAKAIGAVNTILIKDGKSYGYNTDYYGFGKMLERAKVNIEGNSFFVLGAGGAARSILKYLEDSKAKKIVLVSRDREKAFKKFKDFNINFMSYGELEEINEEFALINTTPCGMYPNINSVAVSEKVIKKFKVAVDIVYNPLETKFLKMAKDNGLKTVDGLFMLVGQGVKAEEIWNGIKVDKSTEEDIYEELKCRF</sequence>
<name>AROE_CLOP1</name>
<gene>
    <name evidence="1" type="primary">aroE</name>
    <name type="ordered locus">CPF_0693</name>
</gene>